<proteinExistence type="inferred from homology"/>
<feature type="chain" id="PRO_1000147417" description="UDP-N-acetylmuramoylalanine--D-glutamate ligase">
    <location>
        <begin position="1"/>
        <end position="450"/>
    </location>
</feature>
<feature type="binding site" evidence="1">
    <location>
        <begin position="119"/>
        <end position="125"/>
    </location>
    <ligand>
        <name>ATP</name>
        <dbReference type="ChEBI" id="CHEBI:30616"/>
    </ligand>
</feature>
<reference key="1">
    <citation type="journal article" date="2010" name="Genome Biol.">
        <title>Structure and dynamics of the pan-genome of Streptococcus pneumoniae and closely related species.</title>
        <authorList>
            <person name="Donati C."/>
            <person name="Hiller N.L."/>
            <person name="Tettelin H."/>
            <person name="Muzzi A."/>
            <person name="Croucher N.J."/>
            <person name="Angiuoli S.V."/>
            <person name="Oggioni M."/>
            <person name="Dunning Hotopp J.C."/>
            <person name="Hu F.Z."/>
            <person name="Riley D.R."/>
            <person name="Covacci A."/>
            <person name="Mitchell T.J."/>
            <person name="Bentley S.D."/>
            <person name="Kilian M."/>
            <person name="Ehrlich G.D."/>
            <person name="Rappuoli R."/>
            <person name="Moxon E.R."/>
            <person name="Masignani V."/>
        </authorList>
    </citation>
    <scope>NUCLEOTIDE SEQUENCE [LARGE SCALE GENOMIC DNA]</scope>
    <source>
        <strain>P1031</strain>
    </source>
</reference>
<organism>
    <name type="scientific">Streptococcus pneumoniae (strain P1031)</name>
    <dbReference type="NCBI Taxonomy" id="488223"/>
    <lineage>
        <taxon>Bacteria</taxon>
        <taxon>Bacillati</taxon>
        <taxon>Bacillota</taxon>
        <taxon>Bacilli</taxon>
        <taxon>Lactobacillales</taxon>
        <taxon>Streptococcaceae</taxon>
        <taxon>Streptococcus</taxon>
    </lineage>
</organism>
<evidence type="ECO:0000255" key="1">
    <source>
        <dbReference type="HAMAP-Rule" id="MF_00639"/>
    </source>
</evidence>
<dbReference type="EC" id="6.3.2.9" evidence="1"/>
<dbReference type="EMBL" id="CP000920">
    <property type="protein sequence ID" value="ACO21455.1"/>
    <property type="molecule type" value="Genomic_DNA"/>
</dbReference>
<dbReference type="RefSeq" id="WP_000863038.1">
    <property type="nucleotide sequence ID" value="NC_012467.1"/>
</dbReference>
<dbReference type="SMR" id="C1CJF2"/>
<dbReference type="GeneID" id="45653920"/>
<dbReference type="KEGG" id="spp:SPP_0707"/>
<dbReference type="HOGENOM" id="CLU_032540_0_1_9"/>
<dbReference type="UniPathway" id="UPA00219"/>
<dbReference type="GO" id="GO:0005737">
    <property type="term" value="C:cytoplasm"/>
    <property type="evidence" value="ECO:0007669"/>
    <property type="project" value="UniProtKB-SubCell"/>
</dbReference>
<dbReference type="GO" id="GO:0005524">
    <property type="term" value="F:ATP binding"/>
    <property type="evidence" value="ECO:0007669"/>
    <property type="project" value="UniProtKB-UniRule"/>
</dbReference>
<dbReference type="GO" id="GO:0008764">
    <property type="term" value="F:UDP-N-acetylmuramoylalanine-D-glutamate ligase activity"/>
    <property type="evidence" value="ECO:0007669"/>
    <property type="project" value="UniProtKB-UniRule"/>
</dbReference>
<dbReference type="GO" id="GO:0051301">
    <property type="term" value="P:cell division"/>
    <property type="evidence" value="ECO:0007669"/>
    <property type="project" value="UniProtKB-KW"/>
</dbReference>
<dbReference type="GO" id="GO:0071555">
    <property type="term" value="P:cell wall organization"/>
    <property type="evidence" value="ECO:0007669"/>
    <property type="project" value="UniProtKB-KW"/>
</dbReference>
<dbReference type="GO" id="GO:0009252">
    <property type="term" value="P:peptidoglycan biosynthetic process"/>
    <property type="evidence" value="ECO:0007669"/>
    <property type="project" value="UniProtKB-UniRule"/>
</dbReference>
<dbReference type="GO" id="GO:0008360">
    <property type="term" value="P:regulation of cell shape"/>
    <property type="evidence" value="ECO:0007669"/>
    <property type="project" value="UniProtKB-KW"/>
</dbReference>
<dbReference type="Gene3D" id="3.90.190.20">
    <property type="entry name" value="Mur ligase, C-terminal domain"/>
    <property type="match status" value="1"/>
</dbReference>
<dbReference type="Gene3D" id="3.40.1190.10">
    <property type="entry name" value="Mur-like, catalytic domain"/>
    <property type="match status" value="1"/>
</dbReference>
<dbReference type="Gene3D" id="3.40.50.720">
    <property type="entry name" value="NAD(P)-binding Rossmann-like Domain"/>
    <property type="match status" value="1"/>
</dbReference>
<dbReference type="HAMAP" id="MF_00639">
    <property type="entry name" value="MurD"/>
    <property type="match status" value="1"/>
</dbReference>
<dbReference type="InterPro" id="IPR036565">
    <property type="entry name" value="Mur-like_cat_sf"/>
</dbReference>
<dbReference type="InterPro" id="IPR004101">
    <property type="entry name" value="Mur_ligase_C"/>
</dbReference>
<dbReference type="InterPro" id="IPR036615">
    <property type="entry name" value="Mur_ligase_C_dom_sf"/>
</dbReference>
<dbReference type="InterPro" id="IPR013221">
    <property type="entry name" value="Mur_ligase_cen"/>
</dbReference>
<dbReference type="InterPro" id="IPR005762">
    <property type="entry name" value="MurD"/>
</dbReference>
<dbReference type="NCBIfam" id="TIGR01087">
    <property type="entry name" value="murD"/>
    <property type="match status" value="1"/>
</dbReference>
<dbReference type="PANTHER" id="PTHR43692">
    <property type="entry name" value="UDP-N-ACETYLMURAMOYLALANINE--D-GLUTAMATE LIGASE"/>
    <property type="match status" value="1"/>
</dbReference>
<dbReference type="PANTHER" id="PTHR43692:SF1">
    <property type="entry name" value="UDP-N-ACETYLMURAMOYLALANINE--D-GLUTAMATE LIGASE"/>
    <property type="match status" value="1"/>
</dbReference>
<dbReference type="Pfam" id="PF02875">
    <property type="entry name" value="Mur_ligase_C"/>
    <property type="match status" value="1"/>
</dbReference>
<dbReference type="Pfam" id="PF08245">
    <property type="entry name" value="Mur_ligase_M"/>
    <property type="match status" value="1"/>
</dbReference>
<dbReference type="Pfam" id="PF21799">
    <property type="entry name" value="MurD-like_N"/>
    <property type="match status" value="1"/>
</dbReference>
<dbReference type="SUPFAM" id="SSF51984">
    <property type="entry name" value="MurCD N-terminal domain"/>
    <property type="match status" value="1"/>
</dbReference>
<dbReference type="SUPFAM" id="SSF53623">
    <property type="entry name" value="MurD-like peptide ligases, catalytic domain"/>
    <property type="match status" value="1"/>
</dbReference>
<dbReference type="SUPFAM" id="SSF53244">
    <property type="entry name" value="MurD-like peptide ligases, peptide-binding domain"/>
    <property type="match status" value="1"/>
</dbReference>
<name>MURD_STRZP</name>
<protein>
    <recommendedName>
        <fullName evidence="1">UDP-N-acetylmuramoylalanine--D-glutamate ligase</fullName>
        <ecNumber evidence="1">6.3.2.9</ecNumber>
    </recommendedName>
    <alternativeName>
        <fullName evidence="1">D-glutamic acid-adding enzyme</fullName>
    </alternativeName>
    <alternativeName>
        <fullName evidence="1">UDP-N-acetylmuramoyl-L-alanyl-D-glutamate synthetase</fullName>
    </alternativeName>
</protein>
<keyword id="KW-0067">ATP-binding</keyword>
<keyword id="KW-0131">Cell cycle</keyword>
<keyword id="KW-0132">Cell division</keyword>
<keyword id="KW-0133">Cell shape</keyword>
<keyword id="KW-0961">Cell wall biogenesis/degradation</keyword>
<keyword id="KW-0963">Cytoplasm</keyword>
<keyword id="KW-0436">Ligase</keyword>
<keyword id="KW-0547">Nucleotide-binding</keyword>
<keyword id="KW-0573">Peptidoglycan synthesis</keyword>
<comment type="function">
    <text evidence="1">Cell wall formation. Catalyzes the addition of glutamate to the nucleotide precursor UDP-N-acetylmuramoyl-L-alanine (UMA).</text>
</comment>
<comment type="catalytic activity">
    <reaction evidence="1">
        <text>UDP-N-acetyl-alpha-D-muramoyl-L-alanine + D-glutamate + ATP = UDP-N-acetyl-alpha-D-muramoyl-L-alanyl-D-glutamate + ADP + phosphate + H(+)</text>
        <dbReference type="Rhea" id="RHEA:16429"/>
        <dbReference type="ChEBI" id="CHEBI:15378"/>
        <dbReference type="ChEBI" id="CHEBI:29986"/>
        <dbReference type="ChEBI" id="CHEBI:30616"/>
        <dbReference type="ChEBI" id="CHEBI:43474"/>
        <dbReference type="ChEBI" id="CHEBI:83898"/>
        <dbReference type="ChEBI" id="CHEBI:83900"/>
        <dbReference type="ChEBI" id="CHEBI:456216"/>
        <dbReference type="EC" id="6.3.2.9"/>
    </reaction>
</comment>
<comment type="pathway">
    <text evidence="1">Cell wall biogenesis; peptidoglycan biosynthesis.</text>
</comment>
<comment type="subcellular location">
    <subcellularLocation>
        <location evidence="1">Cytoplasm</location>
    </subcellularLocation>
</comment>
<comment type="similarity">
    <text evidence="1">Belongs to the MurCDEF family.</text>
</comment>
<accession>C1CJF2</accession>
<gene>
    <name evidence="1" type="primary">murD</name>
    <name type="ordered locus">SPP_0707</name>
</gene>
<sequence length="450" mass="48422">MKVIDQFKNKKVLVLGLAKSGESAARLLDKLGAIVTVNDGKPFEDNPAAQSLLEEGIKVITGGHPLELLDEEFALMVKNPGIPYNNPMIEKALAKGIPVLTEVELAYLISEAPIIGITGSNGKTTTTTMIGEVLTAAGQHGLLSGNIGYPASQVAQIASDKDTLVMELSSFQLMGVQEFHPEIAVITNLMPTHIDYHGSFSEYVAAKWNIQNKMTAADFLVLNFNQDLAKDLTSKTEATVVPFSTLEKVDGAYLEDGQLYFRGEVVMAANEIGVPGSHNVENALATIAVAKLRGVDNQTIKETLSAFGGVKHRLQFVDDIKGVKFYNDSKSTNILATQKALSGFDNSKVVLIAGGLDRGNEFDELVPDITGLKKMVILGQSAERVKRAADKAGVAYVEATDIADATRKAYELATQGDVVLLSPANASWDMYANFEVRGDLFIDTVAELKE</sequence>